<sequence length="100" mass="11501">MEPIEVFKALSNESRLQILQWLKEPDRHFAPHEGIDMNTIGVCVSQITDKLKMTQSTASQYLTILLRAGLIKAERIGKYTYYKRDEEAIGKLADFLKTEI</sequence>
<keyword id="KW-0238">DNA-binding</keyword>
<keyword id="KW-1185">Reference proteome</keyword>
<keyword id="KW-0804">Transcription</keyword>
<keyword id="KW-0805">Transcription regulation</keyword>
<protein>
    <recommendedName>
        <fullName>Uncharacterized HTH-type transcriptional regulator YbzH</fullName>
    </recommendedName>
</protein>
<proteinExistence type="predicted"/>
<dbReference type="EMBL" id="AL009126">
    <property type="protein sequence ID" value="CAX52540.1"/>
    <property type="molecule type" value="Genomic_DNA"/>
</dbReference>
<dbReference type="RefSeq" id="WP_003234907.1">
    <property type="nucleotide sequence ID" value="NZ_OZ025638.1"/>
</dbReference>
<dbReference type="RefSeq" id="YP_003097670.1">
    <property type="nucleotide sequence ID" value="NC_000964.3"/>
</dbReference>
<dbReference type="SMR" id="C0H3S9"/>
<dbReference type="FunCoup" id="C0H3S9">
    <property type="interactions" value="1"/>
</dbReference>
<dbReference type="STRING" id="224308.BSU01889"/>
<dbReference type="PaxDb" id="224308-BSU01889"/>
<dbReference type="EnsemblBacteria" id="CAX52540">
    <property type="protein sequence ID" value="CAX52540"/>
    <property type="gene ID" value="BSU_01889"/>
</dbReference>
<dbReference type="GeneID" id="8302965"/>
<dbReference type="KEGG" id="bsu:BSU01889"/>
<dbReference type="PATRIC" id="fig|224308.179.peg.195"/>
<dbReference type="eggNOG" id="COG0640">
    <property type="taxonomic scope" value="Bacteria"/>
</dbReference>
<dbReference type="InParanoid" id="C0H3S9"/>
<dbReference type="OrthoDB" id="9790747at2"/>
<dbReference type="PhylomeDB" id="C0H3S9"/>
<dbReference type="BioCyc" id="BSUB:BSU01889-MONOMER"/>
<dbReference type="PRO" id="PR:C0H3S9"/>
<dbReference type="Proteomes" id="UP000001570">
    <property type="component" value="Chromosome"/>
</dbReference>
<dbReference type="GO" id="GO:0003677">
    <property type="term" value="F:DNA binding"/>
    <property type="evidence" value="ECO:0007669"/>
    <property type="project" value="UniProtKB-KW"/>
</dbReference>
<dbReference type="GO" id="GO:0003700">
    <property type="term" value="F:DNA-binding transcription factor activity"/>
    <property type="evidence" value="ECO:0007669"/>
    <property type="project" value="InterPro"/>
</dbReference>
<dbReference type="GO" id="GO:0006355">
    <property type="term" value="P:regulation of DNA-templated transcription"/>
    <property type="evidence" value="ECO:0000318"/>
    <property type="project" value="GO_Central"/>
</dbReference>
<dbReference type="CDD" id="cd00090">
    <property type="entry name" value="HTH_ARSR"/>
    <property type="match status" value="1"/>
</dbReference>
<dbReference type="FunFam" id="1.10.10.10:FF:000594">
    <property type="entry name" value="ArsR family transcriptional regulator"/>
    <property type="match status" value="1"/>
</dbReference>
<dbReference type="Gene3D" id="1.10.10.10">
    <property type="entry name" value="Winged helix-like DNA-binding domain superfamily/Winged helix DNA-binding domain"/>
    <property type="match status" value="1"/>
</dbReference>
<dbReference type="InterPro" id="IPR011991">
    <property type="entry name" value="ArsR-like_HTH"/>
</dbReference>
<dbReference type="InterPro" id="IPR001845">
    <property type="entry name" value="HTH_ArsR_DNA-bd_dom"/>
</dbReference>
<dbReference type="InterPro" id="IPR051081">
    <property type="entry name" value="HTH_MetalResp_TranReg"/>
</dbReference>
<dbReference type="InterPro" id="IPR036388">
    <property type="entry name" value="WH-like_DNA-bd_sf"/>
</dbReference>
<dbReference type="InterPro" id="IPR036390">
    <property type="entry name" value="WH_DNA-bd_sf"/>
</dbReference>
<dbReference type="PANTHER" id="PTHR33154">
    <property type="entry name" value="TRANSCRIPTIONAL REGULATOR, ARSR FAMILY"/>
    <property type="match status" value="1"/>
</dbReference>
<dbReference type="PANTHER" id="PTHR33154:SF33">
    <property type="entry name" value="TRANSCRIPTIONAL REPRESSOR SDPR"/>
    <property type="match status" value="1"/>
</dbReference>
<dbReference type="Pfam" id="PF01022">
    <property type="entry name" value="HTH_5"/>
    <property type="match status" value="1"/>
</dbReference>
<dbReference type="SMART" id="SM00418">
    <property type="entry name" value="HTH_ARSR"/>
    <property type="match status" value="1"/>
</dbReference>
<dbReference type="SUPFAM" id="SSF46785">
    <property type="entry name" value="Winged helix' DNA-binding domain"/>
    <property type="match status" value="1"/>
</dbReference>
<dbReference type="PROSITE" id="PS50987">
    <property type="entry name" value="HTH_ARSR_2"/>
    <property type="match status" value="1"/>
</dbReference>
<organism>
    <name type="scientific">Bacillus subtilis (strain 168)</name>
    <dbReference type="NCBI Taxonomy" id="224308"/>
    <lineage>
        <taxon>Bacteria</taxon>
        <taxon>Bacillati</taxon>
        <taxon>Bacillota</taxon>
        <taxon>Bacilli</taxon>
        <taxon>Bacillales</taxon>
        <taxon>Bacillaceae</taxon>
        <taxon>Bacillus</taxon>
    </lineage>
</organism>
<accession>C0H3S9</accession>
<evidence type="ECO:0000255" key="1">
    <source>
        <dbReference type="PROSITE-ProRule" id="PRU00340"/>
    </source>
</evidence>
<name>YBZH_BACSU</name>
<feature type="chain" id="PRO_0000383642" description="Uncharacterized HTH-type transcriptional regulator YbzH">
    <location>
        <begin position="1"/>
        <end position="100"/>
    </location>
</feature>
<feature type="domain" description="HTH arsR-type" evidence="1">
    <location>
        <begin position="1"/>
        <end position="100"/>
    </location>
</feature>
<feature type="DNA-binding region" description="H-T-H motif" evidence="1">
    <location>
        <begin position="44"/>
        <end position="67"/>
    </location>
</feature>
<reference key="1">
    <citation type="journal article" date="1997" name="Nature">
        <title>The complete genome sequence of the Gram-positive bacterium Bacillus subtilis.</title>
        <authorList>
            <person name="Kunst F."/>
            <person name="Ogasawara N."/>
            <person name="Moszer I."/>
            <person name="Albertini A.M."/>
            <person name="Alloni G."/>
            <person name="Azevedo V."/>
            <person name="Bertero M.G."/>
            <person name="Bessieres P."/>
            <person name="Bolotin A."/>
            <person name="Borchert S."/>
            <person name="Borriss R."/>
            <person name="Boursier L."/>
            <person name="Brans A."/>
            <person name="Braun M."/>
            <person name="Brignell S.C."/>
            <person name="Bron S."/>
            <person name="Brouillet S."/>
            <person name="Bruschi C.V."/>
            <person name="Caldwell B."/>
            <person name="Capuano V."/>
            <person name="Carter N.M."/>
            <person name="Choi S.-K."/>
            <person name="Codani J.-J."/>
            <person name="Connerton I.F."/>
            <person name="Cummings N.J."/>
            <person name="Daniel R.A."/>
            <person name="Denizot F."/>
            <person name="Devine K.M."/>
            <person name="Duesterhoeft A."/>
            <person name="Ehrlich S.D."/>
            <person name="Emmerson P.T."/>
            <person name="Entian K.-D."/>
            <person name="Errington J."/>
            <person name="Fabret C."/>
            <person name="Ferrari E."/>
            <person name="Foulger D."/>
            <person name="Fritz C."/>
            <person name="Fujita M."/>
            <person name="Fujita Y."/>
            <person name="Fuma S."/>
            <person name="Galizzi A."/>
            <person name="Galleron N."/>
            <person name="Ghim S.-Y."/>
            <person name="Glaser P."/>
            <person name="Goffeau A."/>
            <person name="Golightly E.J."/>
            <person name="Grandi G."/>
            <person name="Guiseppi G."/>
            <person name="Guy B.J."/>
            <person name="Haga K."/>
            <person name="Haiech J."/>
            <person name="Harwood C.R."/>
            <person name="Henaut A."/>
            <person name="Hilbert H."/>
            <person name="Holsappel S."/>
            <person name="Hosono S."/>
            <person name="Hullo M.-F."/>
            <person name="Itaya M."/>
            <person name="Jones L.-M."/>
            <person name="Joris B."/>
            <person name="Karamata D."/>
            <person name="Kasahara Y."/>
            <person name="Klaerr-Blanchard M."/>
            <person name="Klein C."/>
            <person name="Kobayashi Y."/>
            <person name="Koetter P."/>
            <person name="Koningstein G."/>
            <person name="Krogh S."/>
            <person name="Kumano M."/>
            <person name="Kurita K."/>
            <person name="Lapidus A."/>
            <person name="Lardinois S."/>
            <person name="Lauber J."/>
            <person name="Lazarevic V."/>
            <person name="Lee S.-M."/>
            <person name="Levine A."/>
            <person name="Liu H."/>
            <person name="Masuda S."/>
            <person name="Mauel C."/>
            <person name="Medigue C."/>
            <person name="Medina N."/>
            <person name="Mellado R.P."/>
            <person name="Mizuno M."/>
            <person name="Moestl D."/>
            <person name="Nakai S."/>
            <person name="Noback M."/>
            <person name="Noone D."/>
            <person name="O'Reilly M."/>
            <person name="Ogawa K."/>
            <person name="Ogiwara A."/>
            <person name="Oudega B."/>
            <person name="Park S.-H."/>
            <person name="Parro V."/>
            <person name="Pohl T.M."/>
            <person name="Portetelle D."/>
            <person name="Porwollik S."/>
            <person name="Prescott A.M."/>
            <person name="Presecan E."/>
            <person name="Pujic P."/>
            <person name="Purnelle B."/>
            <person name="Rapoport G."/>
            <person name="Rey M."/>
            <person name="Reynolds S."/>
            <person name="Rieger M."/>
            <person name="Rivolta C."/>
            <person name="Rocha E."/>
            <person name="Roche B."/>
            <person name="Rose M."/>
            <person name="Sadaie Y."/>
            <person name="Sato T."/>
            <person name="Scanlan E."/>
            <person name="Schleich S."/>
            <person name="Schroeter R."/>
            <person name="Scoffone F."/>
            <person name="Sekiguchi J."/>
            <person name="Sekowska A."/>
            <person name="Seror S.J."/>
            <person name="Serror P."/>
            <person name="Shin B.-S."/>
            <person name="Soldo B."/>
            <person name="Sorokin A."/>
            <person name="Tacconi E."/>
            <person name="Takagi T."/>
            <person name="Takahashi H."/>
            <person name="Takemaru K."/>
            <person name="Takeuchi M."/>
            <person name="Tamakoshi A."/>
            <person name="Tanaka T."/>
            <person name="Terpstra P."/>
            <person name="Tognoni A."/>
            <person name="Tosato V."/>
            <person name="Uchiyama S."/>
            <person name="Vandenbol M."/>
            <person name="Vannier F."/>
            <person name="Vassarotti A."/>
            <person name="Viari A."/>
            <person name="Wambutt R."/>
            <person name="Wedler E."/>
            <person name="Wedler H."/>
            <person name="Weitzenegger T."/>
            <person name="Winters P."/>
            <person name="Wipat A."/>
            <person name="Yamamoto H."/>
            <person name="Yamane K."/>
            <person name="Yasumoto K."/>
            <person name="Yata K."/>
            <person name="Yoshida K."/>
            <person name="Yoshikawa H.-F."/>
            <person name="Zumstein E."/>
            <person name="Yoshikawa H."/>
            <person name="Danchin A."/>
        </authorList>
    </citation>
    <scope>NUCLEOTIDE SEQUENCE [LARGE SCALE GENOMIC DNA]</scope>
    <source>
        <strain>168</strain>
    </source>
</reference>
<gene>
    <name type="primary">ybzH</name>
    <name type="ordered locus">BSU01889</name>
</gene>